<feature type="chain" id="PRO_0000041120" description="Outer capsid protein VP4" evidence="1">
    <location>
        <begin position="1"/>
        <end position="776"/>
    </location>
</feature>
<feature type="chain" id="PRO_0000041121" description="Outer capsid protein VP8*" evidence="1">
    <location>
        <begin position="1"/>
        <end position="231"/>
    </location>
</feature>
<feature type="chain" id="PRO_0000041122" description="Outer capsid protein VP5*" evidence="1">
    <location>
        <begin position="248"/>
        <end position="776"/>
    </location>
</feature>
<feature type="region of interest" description="Spike head" evidence="1">
    <location>
        <begin position="65"/>
        <end position="224"/>
    </location>
</feature>
<feature type="region of interest" description="Spike body and stalk (antigen domain)" evidence="1">
    <location>
        <begin position="248"/>
        <end position="479"/>
    </location>
</feature>
<feature type="region of interest" description="Hydrophobic; possible role in virus entry into host cell" evidence="1">
    <location>
        <begin position="389"/>
        <end position="409"/>
    </location>
</feature>
<feature type="region of interest" description="Spike foot" evidence="1">
    <location>
        <begin position="510"/>
        <end position="776"/>
    </location>
</feature>
<feature type="coiled-coil region" evidence="1">
    <location>
        <begin position="484"/>
        <end position="511"/>
    </location>
</feature>
<feature type="short sequence motif" description="DGE motif; interaction with ITGA2/ITGB1 heterodimer" evidence="1">
    <location>
        <begin position="308"/>
        <end position="310"/>
    </location>
</feature>
<feature type="short sequence motif" description="YGL motif; interaction with ITGA4" evidence="1">
    <location>
        <begin position="448"/>
        <end position="450"/>
    </location>
</feature>
<feature type="short sequence motif" description="KID motif; interaction with HSPA8" evidence="1">
    <location>
        <begin position="644"/>
        <end position="646"/>
    </location>
</feature>
<feature type="site" description="Binding to sialic acid" evidence="1">
    <location>
        <position position="101"/>
    </location>
</feature>
<feature type="site" description="Binding to sialic acid" evidence="1">
    <location>
        <position position="190"/>
    </location>
</feature>
<feature type="site" description="Cleavage" evidence="1">
    <location>
        <begin position="231"/>
        <end position="232"/>
    </location>
</feature>
<feature type="site" description="Cleavage" evidence="1">
    <location>
        <begin position="241"/>
        <end position="242"/>
    </location>
</feature>
<feature type="site" description="Cleavage; associated with enhancement of infectivity" evidence="1">
    <location>
        <begin position="247"/>
        <end position="248"/>
    </location>
</feature>
<feature type="disulfide bond" evidence="1">
    <location>
        <begin position="203"/>
        <end position="216"/>
    </location>
</feature>
<feature type="disulfide bond" evidence="1">
    <location>
        <begin position="318"/>
        <end position="380"/>
    </location>
</feature>
<feature type="sequence conflict" description="In Ref. 2; BAA03850." evidence="2" ref="2">
    <original>F</original>
    <variation>L</variation>
    <location>
        <position position="261"/>
    </location>
</feature>
<comment type="function">
    <molecule>Outer capsid protein VP4</molecule>
    <text evidence="1">Spike-forming protein that mediates virion attachment to the host epithelial cell receptors and plays a major role in cell penetration, determination of host range restriction and virulence. Rotavirus attachment and entry into the host cell probably involves multiple sequential contacts between the outer capsid proteins VP4 and VP7, and the cell receptors. It is subsequently lost, together with VP7, following virus entry into the host cell. Following entry into the host cell, low intracellular or intravesicular Ca(2+) concentration probably causes the calcium-stabilized VP7 trimers to dissociate from the virion. This step is probably necessary for the membrane-disrupting entry step and the release of VP4, which is locked onto the virion by VP7. During the virus exit from the host cell, VP4 seems to be required to target the newly formed virions to the host cell lipid rafts.</text>
</comment>
<comment type="function">
    <molecule>Outer capsid protein VP5*</molecule>
    <text evidence="1">Forms the spike 'foot' and 'body' and acts as a membrane permeabilization protein that mediates release of viral particles from endosomal compartments into the cytoplasm. During entry, the part of VP5* that protrudes from the virus folds back on itself and reorganizes from a local dimer to a trimer. This reorganization may be linked to membrane penetration by exposing VP5* hydrophobic region. In integrin-dependent strains, VP5* targets the integrin heterodimer ITGA2/ITGB1 for cell attachment.</text>
</comment>
<comment type="function">
    <molecule>Outer capsid protein VP8*</molecule>
    <text evidence="1">Forms the head of the spikes and mediates the recognition of specific host cell surface glycans. It is the viral hemagglutinin and an important target of neutralizing antibodies. In sialic acid-dependent strains, VP8* binds to host cell sialic acid, most probably a ganglioside, providing the initial contact. In some other strains, VP8* mediates the attachment to histo-blood group antigens (HBGAs) for viral entry.</text>
</comment>
<comment type="subunit">
    <molecule>Outer capsid protein VP4</molecule>
    <text evidence="2">Homotrimer. VP4 adopts a dimeric appearance above the capsid surface, while forming a trimeric base anchored inside the capsid layer. Only hints of the third molecule are observed above the capsid surface. It probably performs a series of molecular rearrangements during viral entry. Prior to trypsin cleavage, it is flexible. The priming trypsin cleavage triggers its rearrangement into rigid spikes with approximate two-fold symmetry of their protruding parts. After an unknown second triggering event, cleaved VP4 may undergo another rearrangement, in which two VP5* subunits fold back on themselves and join a third subunit to form a tightly associated trimer, shaped like a folded umbrella. Interacts with VP6. Interacts with VP7.</text>
</comment>
<comment type="subunit">
    <molecule>Outer capsid protein VP5*</molecule>
    <text evidence="2">Homotrimer. The trimer is coiled-coil stabilized by its C-terminus, however, its N-terminus, known as antigen domain or 'body', seems to be flexible allowing it to self-associate either as a dimer or a trimer.</text>
</comment>
<comment type="subcellular location">
    <molecule>Outer capsid protein VP4</molecule>
    <subcellularLocation>
        <location evidence="1">Virion</location>
    </subcellularLocation>
    <subcellularLocation>
        <location evidence="1">Host rough endoplasmic reticulum</location>
    </subcellularLocation>
    <subcellularLocation>
        <location evidence="1">Host cell membrane</location>
    </subcellularLocation>
    <subcellularLocation>
        <location evidence="1">Host cytoplasm</location>
        <location evidence="1">Host cytoskeleton</location>
    </subcellularLocation>
    <subcellularLocation>
        <location evidence="1">Host endoplasmic reticulum-Golgi intermediate compartment</location>
    </subcellularLocation>
    <text evidence="1">The outer layer contains 180 copies of VP4, grouped as 60 dimers. Immature double-layered particles assembled in the cytoplasm bud across the membrane of the endoplasmic reticulum, acquiring during this process a transient lipid membrane that is modified with the ER resident viral glycoproteins NSP4 and VP7; these enveloped particles also contain VP4. As the particles move towards the interior of the ER cisternae, the transient lipid membrane and the non-structural protein NSP4 are lost, while the virus surface proteins VP4 and VP7 rearrange to form the outermost virus protein layer, yielding mature infectious triple-layered particles. VP4 also seems to associate with lipid rafts of the host cell membrane probably for the exit of the virus from the infected cell by an alternate pathway.</text>
</comment>
<comment type="subcellular location">
    <molecule>Outer capsid protein VP8*</molecule>
    <subcellularLocation>
        <location evidence="1">Virion</location>
    </subcellularLocation>
    <text evidence="1">Outer capsid protein.</text>
</comment>
<comment type="subcellular location">
    <molecule>Outer capsid protein VP5*</molecule>
    <subcellularLocation>
        <location evidence="1">Virion</location>
    </subcellularLocation>
    <text evidence="1">Outer capsid protein.</text>
</comment>
<comment type="domain">
    <molecule>Outer capsid protein VP4</molecule>
    <text evidence="1">The VP4 spike is divided into a foot, a stalk and body, and a head.</text>
</comment>
<comment type="PTM">
    <molecule>Outer capsid protein VP4</molecule>
    <text evidence="1">Proteolytic cleavage by trypsin results in activation of VP4 functions and greatly increases infectivity. The penetration into the host cell is dependent on trypsin treatment of VP4. It produces two peptides, VP5* and VP8* that remain associated with the virion. Cleavage of VP4 by trypsin probably occurs in vivo in the lumen of the intestine prior to infection of enterocytes. Trypsin seems to be incorporated into the three-layered viral particles but remains inactive as long as the viral outer capsid is intact and would only be activated upon the solubilization of the latter.</text>
</comment>
<comment type="miscellaneous">
    <text evidence="1">In group A rotaviruses, VP4 defines the P serotype.</text>
</comment>
<comment type="miscellaneous">
    <text evidence="1">Some rotavirus strains are neuraminidase-sensitive and require sialic acid to attach to the cell surface. Some rotavirus strains are integrin-dependent. Some rotavirus strains depend on ganglioside for their entry into the host cell. Hsp70 also seems to be involved in the entry of some strains.</text>
</comment>
<comment type="miscellaneous">
    <text evidence="1">This strain probably uses sialic acid to attach to the host cell.</text>
</comment>
<comment type="similarity">
    <text evidence="1">Belongs to the rotavirus VP4 family.</text>
</comment>
<evidence type="ECO:0000255" key="1">
    <source>
        <dbReference type="HAMAP-Rule" id="MF_04132"/>
    </source>
</evidence>
<evidence type="ECO:0000305" key="2"/>
<sequence>MASLIYRQLLTNSYTVDLSDEIQEIGSTKSQNVTINPGPFAQTGYAPVNWGPGEINDSTTVEPLLDGPYQPMTFNPPVDYWMLLAPTTPGVIVEGTNNTDRWLATILIEPNVQSENRTYTIFGIQEQLTVSNTSQDQWKFIDVVKTTANGSIGQYGSLLSSPKLYAVMKHNEKLYTYEGQTPNARTGHYSTTNYDSVNMTAFCDFYIIPRSEESKCTEYINNGLPPIQNTRNVVPLSLTARDVIHYRAQANEDIVISKTSFWKEMQYNRDITIRFKFANTIIKSGGLGYKWSEISFKPANYQYTYTRDGEEVTAHTTCSVNGVNDFSFNGGSLPTDFVVSKFEVIKENSYVYIDYWDDSQAFRNVMYVRSLAANLNSVMCTGGSYNFSLPVGQWPVLTGGAVSLHSAGVTLSTQFTDFVSLNSLRFRFRLAVEEPHFKLTRTRLDRLYGLPAADPNNGKEYYEIAGRFSLISLVPSNDDYQTPIANSVTVRQDLERQLGELREEFNALSQEIAMSQLIDLALLPLDMFSMFSGIKSTIDAAKSMATNVMKKFKKSGLANSVSTLTDSLSDAASSISRGSSIRSIGSSASAWTDVSTQITDISSSVSSVSTQTSTISRRLRLKEMATQTEGMNFDDISAAVLKTKIDKSTQISPNTIPDIVTEASEKFIPNRAYRVINNDDVFEAGIDGKFFAYKVDTFEEIPFDVQKFADLVTDSPVISAIIDFKTLKNLNDNYGITKQQAFNLLRSDPRVLREFINQDNPIIRNRIEQLIMQCRL</sequence>
<proteinExistence type="inferred from homology"/>
<protein>
    <recommendedName>
        <fullName evidence="1">Outer capsid protein VP4</fullName>
    </recommendedName>
    <alternativeName>
        <fullName evidence="1">Hemagglutinin</fullName>
    </alternativeName>
    <component>
        <recommendedName>
            <fullName evidence="1">Outer capsid protein VP8*</fullName>
        </recommendedName>
    </component>
    <component>
        <recommendedName>
            <fullName evidence="1">Outer capsid protein VP5*</fullName>
        </recommendedName>
    </component>
</protein>
<name>VP4_ROTSS</name>
<keyword id="KW-0167">Capsid protein</keyword>
<keyword id="KW-0175">Coiled coil</keyword>
<keyword id="KW-1015">Disulfide bond</keyword>
<keyword id="KW-0348">Hemagglutinin</keyword>
<keyword id="KW-1032">Host cell membrane</keyword>
<keyword id="KW-1035">Host cytoplasm</keyword>
<keyword id="KW-1037">Host cytoskeleton</keyword>
<keyword id="KW-1038">Host endoplasmic reticulum</keyword>
<keyword id="KW-1043">Host membrane</keyword>
<keyword id="KW-0945">Host-virus interaction</keyword>
<keyword id="KW-0472">Membrane</keyword>
<keyword id="KW-1152">Outer capsid protein</keyword>
<keyword id="KW-1161">Viral attachment to host cell</keyword>
<keyword id="KW-1162">Viral penetration into host cytoplasm</keyword>
<keyword id="KW-1173">Viral penetration via permeabilization of host membrane</keyword>
<keyword id="KW-0946">Virion</keyword>
<keyword id="KW-1160">Virus entry into host cell</keyword>
<organismHost>
    <name type="scientific">Macaca mulatta</name>
    <name type="common">Rhesus macaque</name>
    <dbReference type="NCBI Taxonomy" id="9544"/>
</organismHost>
<organism>
    <name type="scientific">Rotavirus A (strain RVA/SA11-SEM/G3P5B[2])</name>
    <name type="common">RV-A</name>
    <name type="synonym">Simian Agent 11 (strain SEM)</name>
    <dbReference type="NCBI Taxonomy" id="10926"/>
    <lineage>
        <taxon>Viruses</taxon>
        <taxon>Riboviria</taxon>
        <taxon>Orthornavirae</taxon>
        <taxon>Duplornaviricota</taxon>
        <taxon>Resentoviricetes</taxon>
        <taxon>Reovirales</taxon>
        <taxon>Sedoreoviridae</taxon>
        <taxon>Rotavirus</taxon>
        <taxon>Rotavirus A</taxon>
    </lineage>
</organism>
<accession>P17464</accession>
<accession>Q86229</accession>
<dbReference type="EMBL" id="M23188">
    <property type="protein sequence ID" value="AAA47355.1"/>
    <property type="molecule type" value="Genomic_RNA"/>
</dbReference>
<dbReference type="EMBL" id="D16346">
    <property type="protein sequence ID" value="BAA03850.1"/>
    <property type="molecule type" value="Genomic_RNA"/>
</dbReference>
<dbReference type="PIR" id="A31159">
    <property type="entry name" value="VPXRS1"/>
</dbReference>
<dbReference type="SMR" id="P17464"/>
<dbReference type="GO" id="GO:0044172">
    <property type="term" value="C:host cell endoplasmic reticulum-Golgi intermediate compartment"/>
    <property type="evidence" value="ECO:0007669"/>
    <property type="project" value="UniProtKB-SubCell"/>
</dbReference>
<dbReference type="GO" id="GO:0020002">
    <property type="term" value="C:host cell plasma membrane"/>
    <property type="evidence" value="ECO:0007669"/>
    <property type="project" value="UniProtKB-SubCell"/>
</dbReference>
<dbReference type="GO" id="GO:0044168">
    <property type="term" value="C:host cell rough endoplasmic reticulum"/>
    <property type="evidence" value="ECO:0007669"/>
    <property type="project" value="UniProtKB-SubCell"/>
</dbReference>
<dbReference type="GO" id="GO:0044163">
    <property type="term" value="C:host cytoskeleton"/>
    <property type="evidence" value="ECO:0007669"/>
    <property type="project" value="UniProtKB-SubCell"/>
</dbReference>
<dbReference type="GO" id="GO:0016020">
    <property type="term" value="C:membrane"/>
    <property type="evidence" value="ECO:0007669"/>
    <property type="project" value="UniProtKB-KW"/>
</dbReference>
<dbReference type="GO" id="GO:0039624">
    <property type="term" value="C:viral outer capsid"/>
    <property type="evidence" value="ECO:0007669"/>
    <property type="project" value="UniProtKB-UniRule"/>
</dbReference>
<dbReference type="GO" id="GO:0039665">
    <property type="term" value="P:permeabilization of host organelle membrane involved in viral entry into host cell"/>
    <property type="evidence" value="ECO:0007669"/>
    <property type="project" value="UniProtKB-UniRule"/>
</dbReference>
<dbReference type="GO" id="GO:0019062">
    <property type="term" value="P:virion attachment to host cell"/>
    <property type="evidence" value="ECO:0007669"/>
    <property type="project" value="UniProtKB-UniRule"/>
</dbReference>
<dbReference type="Gene3D" id="1.20.5.170">
    <property type="match status" value="1"/>
</dbReference>
<dbReference type="Gene3D" id="2.60.120.200">
    <property type="match status" value="1"/>
</dbReference>
<dbReference type="HAMAP" id="MF_04132">
    <property type="entry name" value="Rota_A_VP4"/>
    <property type="match status" value="1"/>
</dbReference>
<dbReference type="HAMAP" id="MF_04125">
    <property type="entry name" value="Rota_VP4"/>
    <property type="match status" value="1"/>
</dbReference>
<dbReference type="InterPro" id="IPR013320">
    <property type="entry name" value="ConA-like_dom_sf"/>
</dbReference>
<dbReference type="InterPro" id="IPR042546">
    <property type="entry name" value="Rota_A_VP4"/>
</dbReference>
<dbReference type="InterPro" id="IPR035330">
    <property type="entry name" value="Rota_VP4_MID"/>
</dbReference>
<dbReference type="InterPro" id="IPR038017">
    <property type="entry name" value="Rota_VP4_MID_sf"/>
</dbReference>
<dbReference type="InterPro" id="IPR000416">
    <property type="entry name" value="VP4_concanavalin-like"/>
</dbReference>
<dbReference type="InterPro" id="IPR035329">
    <property type="entry name" value="VP4_helical"/>
</dbReference>
<dbReference type="Pfam" id="PF17477">
    <property type="entry name" value="Rota_VP4_MID"/>
    <property type="match status" value="1"/>
</dbReference>
<dbReference type="Pfam" id="PF00426">
    <property type="entry name" value="VP4_haemagglut"/>
    <property type="match status" value="1"/>
</dbReference>
<dbReference type="Pfam" id="PF17478">
    <property type="entry name" value="VP4_helical"/>
    <property type="match status" value="1"/>
</dbReference>
<dbReference type="SUPFAM" id="SSF49899">
    <property type="entry name" value="Concanavalin A-like lectins/glucanases"/>
    <property type="match status" value="1"/>
</dbReference>
<dbReference type="SUPFAM" id="SSF111379">
    <property type="entry name" value="VP4 membrane interaction domain"/>
    <property type="match status" value="1"/>
</dbReference>
<reference key="1">
    <citation type="journal article" date="1988" name="J. Virol.">
        <title>Comparative analysis of the VP3 gene of divergent strains of the rotaviruses simian SA11 and bovine Nebraska calf diarrhea virus.</title>
        <authorList>
            <person name="Nishikawa K."/>
            <person name="Taniguchi K."/>
            <person name="Torres A."/>
            <person name="Hoshino Y."/>
            <person name="Green K.Y."/>
            <person name="Kapikian A.Z."/>
            <person name="Chanock R.M."/>
            <person name="Gorziglia M."/>
        </authorList>
    </citation>
    <scope>NUCLEOTIDE SEQUENCE [GENOMIC RNA]</scope>
</reference>
<reference key="2">
    <citation type="journal article" date="1994" name="Virology">
        <title>Differences in plaque size and VP4 sequence found in SA11 virus clones having simian authentic VP4.</title>
        <authorList>
            <person name="Taniguchi K."/>
            <person name="Nishikawa K."/>
            <person name="Kobayashi N."/>
            <person name="Urasawa T."/>
            <person name="Wu H."/>
            <person name="Gorziglia M."/>
            <person name="Urasawa S."/>
        </authorList>
    </citation>
    <scope>NUCLEOTIDE SEQUENCE [GENOMIC RNA]</scope>
</reference>